<reference key="1">
    <citation type="journal article" date="1996" name="DNA Res.">
        <title>A 570-kb DNA sequence of the Escherichia coli K-12 genome corresponding to the 28.0-40.1 min region on the linkage map.</title>
        <authorList>
            <person name="Aiba H."/>
            <person name="Baba T."/>
            <person name="Fujita K."/>
            <person name="Hayashi K."/>
            <person name="Inada T."/>
            <person name="Isono K."/>
            <person name="Itoh T."/>
            <person name="Kasai H."/>
            <person name="Kashimoto K."/>
            <person name="Kimura S."/>
            <person name="Kitakawa M."/>
            <person name="Kitagawa M."/>
            <person name="Makino K."/>
            <person name="Miki T."/>
            <person name="Mizobuchi K."/>
            <person name="Mori H."/>
            <person name="Mori T."/>
            <person name="Motomura K."/>
            <person name="Nakade S."/>
            <person name="Nakamura Y."/>
            <person name="Nashimoto H."/>
            <person name="Nishio Y."/>
            <person name="Oshima T."/>
            <person name="Saito N."/>
            <person name="Sampei G."/>
            <person name="Seki Y."/>
            <person name="Sivasundaram S."/>
            <person name="Tagami H."/>
            <person name="Takeda J."/>
            <person name="Takemoto K."/>
            <person name="Takeuchi Y."/>
            <person name="Wada C."/>
            <person name="Yamamoto Y."/>
            <person name="Horiuchi T."/>
        </authorList>
    </citation>
    <scope>NUCLEOTIDE SEQUENCE [LARGE SCALE GENOMIC DNA]</scope>
    <source>
        <strain>K12 / W3110 / ATCC 27325 / DSM 5911</strain>
    </source>
</reference>
<reference key="2">
    <citation type="journal article" date="1997" name="Science">
        <title>The complete genome sequence of Escherichia coli K-12.</title>
        <authorList>
            <person name="Blattner F.R."/>
            <person name="Plunkett G. III"/>
            <person name="Bloch C.A."/>
            <person name="Perna N.T."/>
            <person name="Burland V."/>
            <person name="Riley M."/>
            <person name="Collado-Vides J."/>
            <person name="Glasner J.D."/>
            <person name="Rode C.K."/>
            <person name="Mayhew G.F."/>
            <person name="Gregor J."/>
            <person name="Davis N.W."/>
            <person name="Kirkpatrick H.A."/>
            <person name="Goeden M.A."/>
            <person name="Rose D.J."/>
            <person name="Mau B."/>
            <person name="Shao Y."/>
        </authorList>
    </citation>
    <scope>NUCLEOTIDE SEQUENCE [LARGE SCALE GENOMIC DNA]</scope>
    <source>
        <strain>K12 / MG1655 / ATCC 47076</strain>
    </source>
</reference>
<reference key="3">
    <citation type="journal article" date="2006" name="Mol. Syst. Biol.">
        <title>Highly accurate genome sequences of Escherichia coli K-12 strains MG1655 and W3110.</title>
        <authorList>
            <person name="Hayashi K."/>
            <person name="Morooka N."/>
            <person name="Yamamoto Y."/>
            <person name="Fujita K."/>
            <person name="Isono K."/>
            <person name="Choi S."/>
            <person name="Ohtsubo E."/>
            <person name="Baba T."/>
            <person name="Wanner B.L."/>
            <person name="Mori H."/>
            <person name="Horiuchi T."/>
        </authorList>
    </citation>
    <scope>NUCLEOTIDE SEQUENCE [LARGE SCALE GENOMIC DNA]</scope>
    <source>
        <strain>K12 / W3110 / ATCC 27325 / DSM 5911</strain>
    </source>
</reference>
<reference key="4">
    <citation type="journal article" date="1990" name="Mol. Gen. Genet.">
        <title>Nitrate reductases of Escherichia coli: sequence of the second nitrate reductase and comparison with that encoded by the narGHJI operon.</title>
        <authorList>
            <person name="Blasco F."/>
            <person name="Iobbi C."/>
            <person name="Ratouchniak J."/>
            <person name="Bonnefoy V."/>
            <person name="Chippaux M."/>
        </authorList>
    </citation>
    <scope>NUCLEOTIDE SEQUENCE [GENOMIC DNA] OF 1-34</scope>
</reference>
<reference key="5">
    <citation type="journal article" date="2004" name="Proteins">
        <title>Crystal structure of E. coli yddE protein reveals a striking homology with diaminopimelate epimerase.</title>
        <authorList>
            <person name="Grassick A."/>
            <person name="Sulzenbacher G."/>
            <person name="Roig-Zamboni V."/>
            <person name="Campanacci V."/>
            <person name="Cambillau C."/>
            <person name="Bourne Y."/>
        </authorList>
    </citation>
    <scope>X-RAY CRYSTALLOGRAPHY (2.05 ANGSTROMS)</scope>
    <scope>SUBUNIT</scope>
</reference>
<organism>
    <name type="scientific">Escherichia coli (strain K12)</name>
    <dbReference type="NCBI Taxonomy" id="83333"/>
    <lineage>
        <taxon>Bacteria</taxon>
        <taxon>Pseudomonadati</taxon>
        <taxon>Pseudomonadota</taxon>
        <taxon>Gammaproteobacteria</taxon>
        <taxon>Enterobacterales</taxon>
        <taxon>Enterobacteriaceae</taxon>
        <taxon>Escherichia</taxon>
    </lineage>
</organism>
<sequence>MKPQVYHVDAFTSQPFRGNSAGVVFPADNLSEAQMQLIARELGHSETAFLLHSDDSDVRIRYFTPTVEVPICGHATVAAHYVRAKVLGLGNCTIWQTSLAGKHRVTIEKHNDDYRISLEQGTPGFEPPLEGETRAAIINALHLTEDDILPGLPIQVATTGHSKVMIPLKPEVDIDALSPDLNALTAISKKIGCNGFFPFQIRPGKNETDGRMFSPAIGIVEDPVTGNANGPMGAWLVHHNVLPHDGNVLRVKGHQGRALGRDGMIEVTVTIRDNQPEKVTISGTAVILFHAEWAIEL</sequence>
<accession>P37757</accession>
<accession>P77430</accession>
<comment type="subunit">
    <text evidence="2">Homodimer and homotetramer.</text>
</comment>
<comment type="similarity">
    <text evidence="3">Belongs to the PhzF family.</text>
</comment>
<dbReference type="EC" id="5.1.-.-"/>
<dbReference type="EMBL" id="U00096">
    <property type="protein sequence ID" value="AAC74546.1"/>
    <property type="molecule type" value="Genomic_DNA"/>
</dbReference>
<dbReference type="EMBL" id="AP009048">
    <property type="protein sequence ID" value="BAA15101.1"/>
    <property type="molecule type" value="Genomic_DNA"/>
</dbReference>
<dbReference type="EMBL" id="X17110">
    <property type="status" value="NOT_ANNOTATED_CDS"/>
    <property type="molecule type" value="Genomic_DNA"/>
</dbReference>
<dbReference type="PIR" id="C64899">
    <property type="entry name" value="C64899"/>
</dbReference>
<dbReference type="RefSeq" id="NP_415981.1">
    <property type="nucleotide sequence ID" value="NC_000913.3"/>
</dbReference>
<dbReference type="RefSeq" id="WP_000804385.1">
    <property type="nucleotide sequence ID" value="NZ_LN832404.1"/>
</dbReference>
<dbReference type="PDB" id="1QY9">
    <property type="method" value="X-ray"/>
    <property type="resolution" value="2.05 A"/>
    <property type="chains" value="A/B/C/D=1-297"/>
</dbReference>
<dbReference type="PDB" id="1QYA">
    <property type="method" value="X-ray"/>
    <property type="resolution" value="2.00 A"/>
    <property type="chains" value="A/B=2-297"/>
</dbReference>
<dbReference type="PDB" id="1SDJ">
    <property type="method" value="X-ray"/>
    <property type="resolution" value="2.30 A"/>
    <property type="chains" value="A=1-297"/>
</dbReference>
<dbReference type="PDBsum" id="1QY9"/>
<dbReference type="PDBsum" id="1QYA"/>
<dbReference type="PDBsum" id="1SDJ"/>
<dbReference type="SMR" id="P37757"/>
<dbReference type="BioGRID" id="4262893">
    <property type="interactions" value="24"/>
</dbReference>
<dbReference type="FunCoup" id="P37757">
    <property type="interactions" value="602"/>
</dbReference>
<dbReference type="IntAct" id="P37757">
    <property type="interactions" value="5"/>
</dbReference>
<dbReference type="STRING" id="511145.b1464"/>
<dbReference type="jPOST" id="P37757"/>
<dbReference type="PaxDb" id="511145-b1464"/>
<dbReference type="EnsemblBacteria" id="AAC74546">
    <property type="protein sequence ID" value="AAC74546"/>
    <property type="gene ID" value="b1464"/>
</dbReference>
<dbReference type="GeneID" id="944782"/>
<dbReference type="KEGG" id="ecj:JW1459"/>
<dbReference type="KEGG" id="eco:b1464"/>
<dbReference type="KEGG" id="ecoc:C3026_08500"/>
<dbReference type="PATRIC" id="fig|1411691.4.peg.804"/>
<dbReference type="EchoBASE" id="EB1772"/>
<dbReference type="eggNOG" id="COG0384">
    <property type="taxonomic scope" value="Bacteria"/>
</dbReference>
<dbReference type="HOGENOM" id="CLU_048756_0_2_6"/>
<dbReference type="InParanoid" id="P37757"/>
<dbReference type="OMA" id="KVGYNET"/>
<dbReference type="OrthoDB" id="9788221at2"/>
<dbReference type="PhylomeDB" id="P37757"/>
<dbReference type="BioCyc" id="EcoCyc:EG11825-MONOMER"/>
<dbReference type="EvolutionaryTrace" id="P37757"/>
<dbReference type="PRO" id="PR:P37757"/>
<dbReference type="Proteomes" id="UP000000625">
    <property type="component" value="Chromosome"/>
</dbReference>
<dbReference type="GO" id="GO:0005737">
    <property type="term" value="C:cytoplasm"/>
    <property type="evidence" value="ECO:0000318"/>
    <property type="project" value="GO_Central"/>
</dbReference>
<dbReference type="GO" id="GO:0016853">
    <property type="term" value="F:isomerase activity"/>
    <property type="evidence" value="ECO:0000318"/>
    <property type="project" value="GO_Central"/>
</dbReference>
<dbReference type="GO" id="GO:0042803">
    <property type="term" value="F:protein homodimerization activity"/>
    <property type="evidence" value="ECO:0000314"/>
    <property type="project" value="EcoCyc"/>
</dbReference>
<dbReference type="GO" id="GO:0009058">
    <property type="term" value="P:biosynthetic process"/>
    <property type="evidence" value="ECO:0007669"/>
    <property type="project" value="InterPro"/>
</dbReference>
<dbReference type="Gene3D" id="3.10.310.10">
    <property type="entry name" value="Diaminopimelate Epimerase, Chain A, domain 1"/>
    <property type="match status" value="2"/>
</dbReference>
<dbReference type="InterPro" id="IPR003719">
    <property type="entry name" value="Phenazine_PhzF-like"/>
</dbReference>
<dbReference type="NCBIfam" id="TIGR00654">
    <property type="entry name" value="PhzF_family"/>
    <property type="match status" value="1"/>
</dbReference>
<dbReference type="NCBIfam" id="NF007625">
    <property type="entry name" value="PRK10281.1"/>
    <property type="match status" value="1"/>
</dbReference>
<dbReference type="PANTHER" id="PTHR13774:SF39">
    <property type="entry name" value="BIOSYNTHESIS PROTEIN, PUTATIVE-RELATED"/>
    <property type="match status" value="1"/>
</dbReference>
<dbReference type="PANTHER" id="PTHR13774">
    <property type="entry name" value="PHENAZINE BIOSYNTHESIS PROTEIN"/>
    <property type="match status" value="1"/>
</dbReference>
<dbReference type="Pfam" id="PF02567">
    <property type="entry name" value="PhzC-PhzF"/>
    <property type="match status" value="1"/>
</dbReference>
<dbReference type="PIRSF" id="PIRSF016184">
    <property type="entry name" value="PhzC_PhzF"/>
    <property type="match status" value="1"/>
</dbReference>
<dbReference type="SUPFAM" id="SSF54506">
    <property type="entry name" value="Diaminopimelate epimerase-like"/>
    <property type="match status" value="1"/>
</dbReference>
<feature type="chain" id="PRO_0000162388" description="Uncharacterized isomerase YddE">
    <location>
        <begin position="1"/>
        <end position="297"/>
    </location>
</feature>
<feature type="active site" evidence="1">
    <location>
        <position position="46"/>
    </location>
</feature>
<feature type="strand" evidence="4">
    <location>
        <begin position="4"/>
        <end position="10"/>
    </location>
</feature>
<feature type="strand" evidence="4">
    <location>
        <begin position="18"/>
        <end position="25"/>
    </location>
</feature>
<feature type="helix" evidence="4">
    <location>
        <begin position="32"/>
        <end position="42"/>
    </location>
</feature>
<feature type="strand" evidence="4">
    <location>
        <begin position="47"/>
        <end position="51"/>
    </location>
</feature>
<feature type="strand" evidence="4">
    <location>
        <begin position="54"/>
        <end position="63"/>
    </location>
</feature>
<feature type="strand" evidence="4">
    <location>
        <begin position="65"/>
        <end position="69"/>
    </location>
</feature>
<feature type="helix" evidence="4">
    <location>
        <begin position="75"/>
        <end position="87"/>
    </location>
</feature>
<feature type="strand" evidence="4">
    <location>
        <begin position="91"/>
        <end position="97"/>
    </location>
</feature>
<feature type="strand" evidence="4">
    <location>
        <begin position="103"/>
        <end position="110"/>
    </location>
</feature>
<feature type="strand" evidence="4">
    <location>
        <begin position="113"/>
        <end position="119"/>
    </location>
</feature>
<feature type="helix" evidence="4">
    <location>
        <begin position="132"/>
        <end position="140"/>
    </location>
</feature>
<feature type="helix" evidence="4">
    <location>
        <begin position="145"/>
        <end position="147"/>
    </location>
</feature>
<feature type="strand" evidence="4">
    <location>
        <begin position="154"/>
        <end position="161"/>
    </location>
</feature>
<feature type="strand" evidence="4">
    <location>
        <begin position="163"/>
        <end position="168"/>
    </location>
</feature>
<feature type="helix" evidence="4">
    <location>
        <begin position="174"/>
        <end position="176"/>
    </location>
</feature>
<feature type="helix" evidence="4">
    <location>
        <begin position="181"/>
        <end position="191"/>
    </location>
</feature>
<feature type="strand" evidence="4">
    <location>
        <begin position="196"/>
        <end position="201"/>
    </location>
</feature>
<feature type="strand" evidence="4">
    <location>
        <begin position="205"/>
        <end position="210"/>
    </location>
</feature>
<feature type="strand" evidence="4">
    <location>
        <begin position="212"/>
        <end position="214"/>
    </location>
</feature>
<feature type="helix" evidence="4">
    <location>
        <begin position="215"/>
        <end position="217"/>
    </location>
</feature>
<feature type="strand" evidence="4">
    <location>
        <begin position="219"/>
        <end position="224"/>
    </location>
</feature>
<feature type="helix" evidence="4">
    <location>
        <begin position="226"/>
        <end position="238"/>
    </location>
</feature>
<feature type="strand" evidence="4">
    <location>
        <begin position="246"/>
        <end position="255"/>
    </location>
</feature>
<feature type="helix" evidence="4">
    <location>
        <begin position="257"/>
        <end position="259"/>
    </location>
</feature>
<feature type="strand" evidence="4">
    <location>
        <begin position="263"/>
        <end position="272"/>
    </location>
</feature>
<feature type="strand" evidence="4">
    <location>
        <begin position="275"/>
        <end position="283"/>
    </location>
</feature>
<feature type="strand" evidence="4">
    <location>
        <begin position="285"/>
        <end position="292"/>
    </location>
</feature>
<name>YDDE_ECOLI</name>
<evidence type="ECO:0000250" key="1"/>
<evidence type="ECO:0000269" key="2">
    <source>
    </source>
</evidence>
<evidence type="ECO:0000305" key="3"/>
<evidence type="ECO:0007829" key="4">
    <source>
        <dbReference type="PDB" id="1QYA"/>
    </source>
</evidence>
<protein>
    <recommendedName>
        <fullName>Uncharacterized isomerase YddE</fullName>
        <ecNumber>5.1.-.-</ecNumber>
    </recommendedName>
    <alternativeName>
        <fullName>ORFB</fullName>
    </alternativeName>
</protein>
<gene>
    <name type="primary">yddE</name>
    <name type="ordered locus">b1464</name>
    <name type="ordered locus">JW1459</name>
</gene>
<proteinExistence type="evidence at protein level"/>
<keyword id="KW-0002">3D-structure</keyword>
<keyword id="KW-0413">Isomerase</keyword>
<keyword id="KW-1185">Reference proteome</keyword>